<evidence type="ECO:0000255" key="1">
    <source>
        <dbReference type="HAMAP-Rule" id="MF_02017"/>
    </source>
</evidence>
<evidence type="ECO:0000256" key="2">
    <source>
        <dbReference type="SAM" id="MobiDB-lite"/>
    </source>
</evidence>
<keyword id="KW-0997">Cell inner membrane</keyword>
<keyword id="KW-1003">Cell membrane</keyword>
<keyword id="KW-0133">Cell shape</keyword>
<keyword id="KW-0238">DNA-binding</keyword>
<keyword id="KW-0472">Membrane</keyword>
<keyword id="KW-0735">Signal-anchor</keyword>
<keyword id="KW-0812">Transmembrane</keyword>
<keyword id="KW-1133">Transmembrane helix</keyword>
<protein>
    <recommendedName>
        <fullName evidence="1">Cytoskeleton protein RodZ</fullName>
    </recommendedName>
</protein>
<feature type="chain" id="PRO_0000361849" description="Cytoskeleton protein RodZ">
    <location>
        <begin position="1"/>
        <end position="334"/>
    </location>
</feature>
<feature type="topological domain" description="Cytoplasmic" evidence="1">
    <location>
        <begin position="1"/>
        <end position="111"/>
    </location>
</feature>
<feature type="transmembrane region" description="Helical; Signal-anchor for type II membrane protein" evidence="1">
    <location>
        <begin position="112"/>
        <end position="132"/>
    </location>
</feature>
<feature type="topological domain" description="Periplasmic" evidence="1">
    <location>
        <begin position="133"/>
        <end position="334"/>
    </location>
</feature>
<feature type="domain" description="HTH cro/C1-type" evidence="1">
    <location>
        <begin position="19"/>
        <end position="71"/>
    </location>
</feature>
<feature type="DNA-binding region" description="H-T-H motif" evidence="1">
    <location>
        <begin position="30"/>
        <end position="49"/>
    </location>
</feature>
<feature type="region of interest" description="Disordered" evidence="2">
    <location>
        <begin position="154"/>
        <end position="241"/>
    </location>
</feature>
<feature type="compositionally biased region" description="Low complexity" evidence="2">
    <location>
        <begin position="176"/>
        <end position="211"/>
    </location>
</feature>
<feature type="compositionally biased region" description="Low complexity" evidence="2">
    <location>
        <begin position="219"/>
        <end position="241"/>
    </location>
</feature>
<reference key="1">
    <citation type="journal article" date="2005" name="Nucleic Acids Res.">
        <title>The genome sequence of Salmonella enterica serovar Choleraesuis, a highly invasive and resistant zoonotic pathogen.</title>
        <authorList>
            <person name="Chiu C.-H."/>
            <person name="Tang P."/>
            <person name="Chu C."/>
            <person name="Hu S."/>
            <person name="Bao Q."/>
            <person name="Yu J."/>
            <person name="Chou Y.-Y."/>
            <person name="Wang H.-S."/>
            <person name="Lee Y.-S."/>
        </authorList>
    </citation>
    <scope>NUCLEOTIDE SEQUENCE [LARGE SCALE GENOMIC DNA]</scope>
    <source>
        <strain>SC-B67</strain>
    </source>
</reference>
<comment type="function">
    <text evidence="1">Cytoskeletal protein that is involved in cell-shape control through regulation of the length of the long axis.</text>
</comment>
<comment type="subcellular location">
    <subcellularLocation>
        <location evidence="1">Cell inner membrane</location>
        <topology evidence="1">Single-pass type II membrane protein</topology>
    </subcellularLocation>
    <text evidence="1">Forms helical filaments along the long axis of the cell.</text>
</comment>
<comment type="domain">
    <text evidence="1">The helix-turn-helix (HTH) motif in the cytoplasmic domain of the N-terminus is involved in the formation of spirals to maintain the rigid rod shape. As this protein is anchored in the cytoplasmic membrane, the HTH motif may contribute to protein-protein interactions to form the RodZ helix, which is localized beneath the cytoplasmic membrane. The C-terminal domain may be critical for determination of the rod shape by probably interacting with enzymes required for synthesis of the peptidoglycan layer, including PBPs in the periplasm.</text>
</comment>
<comment type="similarity">
    <text evidence="1">Belongs to the RodZ family.</text>
</comment>
<name>RODZ_SALCH</name>
<gene>
    <name evidence="1" type="primary">rodZ</name>
    <name type="ordered locus">SCH_2521</name>
</gene>
<sequence>MNTEATHDQNEAQTTGVRLRNAREQLGLSQQAVAERLCLKVSTVRDIEEDKAPSDLASTFLRGYIRSYARLVHVPEEELLPGLEKQAPLRAAKVAPMQSFSLGKRRKKRDGWLMSFTWLVLFVVVGLTGAWWWQNHKAQQEEITTMADQSTAELNADKDSGQSVPLDTRDATSQDTTPAQTAPAPATPVDSTAATQTPAPTAAATQNTVVAPSQANVDTAATSAAPAATETPSALPTSQAGVAAPAADPNALVMNFTADCWLEVTDATGKKLFSGMQRKDGNLNLTGQAPYKLKIGAPAAVQIQYQGKPVDLSRFIRTNQVARLTLNAEPTPAQ</sequence>
<organism>
    <name type="scientific">Salmonella choleraesuis (strain SC-B67)</name>
    <dbReference type="NCBI Taxonomy" id="321314"/>
    <lineage>
        <taxon>Bacteria</taxon>
        <taxon>Pseudomonadati</taxon>
        <taxon>Pseudomonadota</taxon>
        <taxon>Gammaproteobacteria</taxon>
        <taxon>Enterobacterales</taxon>
        <taxon>Enterobacteriaceae</taxon>
        <taxon>Salmonella</taxon>
    </lineage>
</organism>
<dbReference type="EMBL" id="AE017220">
    <property type="protein sequence ID" value="AAX66427.1"/>
    <property type="molecule type" value="Genomic_DNA"/>
</dbReference>
<dbReference type="RefSeq" id="WP_001090898.1">
    <property type="nucleotide sequence ID" value="NC_006905.1"/>
</dbReference>
<dbReference type="SMR" id="Q57LI5"/>
<dbReference type="KEGG" id="sec:SCH_2521"/>
<dbReference type="HOGENOM" id="CLU_047530_3_1_6"/>
<dbReference type="Proteomes" id="UP000000538">
    <property type="component" value="Chromosome"/>
</dbReference>
<dbReference type="GO" id="GO:0005886">
    <property type="term" value="C:plasma membrane"/>
    <property type="evidence" value="ECO:0007669"/>
    <property type="project" value="UniProtKB-SubCell"/>
</dbReference>
<dbReference type="GO" id="GO:0003677">
    <property type="term" value="F:DNA binding"/>
    <property type="evidence" value="ECO:0007669"/>
    <property type="project" value="UniProtKB-KW"/>
</dbReference>
<dbReference type="GO" id="GO:0008360">
    <property type="term" value="P:regulation of cell shape"/>
    <property type="evidence" value="ECO:0007669"/>
    <property type="project" value="UniProtKB-UniRule"/>
</dbReference>
<dbReference type="CDD" id="cd00093">
    <property type="entry name" value="HTH_XRE"/>
    <property type="match status" value="1"/>
</dbReference>
<dbReference type="FunFam" id="1.10.260.40:FF:000014">
    <property type="entry name" value="Cytoskeleton protein RodZ"/>
    <property type="match status" value="1"/>
</dbReference>
<dbReference type="Gene3D" id="1.10.260.40">
    <property type="entry name" value="lambda repressor-like DNA-binding domains"/>
    <property type="match status" value="1"/>
</dbReference>
<dbReference type="HAMAP" id="MF_02017">
    <property type="entry name" value="RodZ"/>
    <property type="match status" value="1"/>
</dbReference>
<dbReference type="InterPro" id="IPR050400">
    <property type="entry name" value="Bact_Cytoskel_RodZ"/>
</dbReference>
<dbReference type="InterPro" id="IPR001387">
    <property type="entry name" value="Cro/C1-type_HTH"/>
</dbReference>
<dbReference type="InterPro" id="IPR010982">
    <property type="entry name" value="Lambda_DNA-bd_dom_sf"/>
</dbReference>
<dbReference type="InterPro" id="IPR023690">
    <property type="entry name" value="RodZ"/>
</dbReference>
<dbReference type="InterPro" id="IPR025194">
    <property type="entry name" value="RodZ-like_C"/>
</dbReference>
<dbReference type="NCBIfam" id="NF008109">
    <property type="entry name" value="PRK10856.1"/>
    <property type="match status" value="1"/>
</dbReference>
<dbReference type="PANTHER" id="PTHR34475">
    <property type="match status" value="1"/>
</dbReference>
<dbReference type="PANTHER" id="PTHR34475:SF1">
    <property type="entry name" value="CYTOSKELETON PROTEIN RODZ"/>
    <property type="match status" value="1"/>
</dbReference>
<dbReference type="Pfam" id="PF13413">
    <property type="entry name" value="HTH_25"/>
    <property type="match status" value="1"/>
</dbReference>
<dbReference type="Pfam" id="PF13464">
    <property type="entry name" value="RodZ_C"/>
    <property type="match status" value="1"/>
</dbReference>
<dbReference type="SMART" id="SM00530">
    <property type="entry name" value="HTH_XRE"/>
    <property type="match status" value="1"/>
</dbReference>
<dbReference type="SUPFAM" id="SSF47413">
    <property type="entry name" value="lambda repressor-like DNA-binding domains"/>
    <property type="match status" value="1"/>
</dbReference>
<dbReference type="PROSITE" id="PS50943">
    <property type="entry name" value="HTH_CROC1"/>
    <property type="match status" value="1"/>
</dbReference>
<accession>Q57LI5</accession>
<proteinExistence type="inferred from homology"/>